<proteinExistence type="inferred from homology"/>
<keyword id="KW-1003">Cell membrane</keyword>
<keyword id="KW-0472">Membrane</keyword>
<keyword id="KW-1185">Reference proteome</keyword>
<keyword id="KW-0812">Transmembrane</keyword>
<keyword id="KW-1133">Transmembrane helix</keyword>
<keyword id="KW-0813">Transport</keyword>
<evidence type="ECO:0000255" key="1"/>
<evidence type="ECO:0000305" key="2"/>
<reference key="1">
    <citation type="journal article" date="2003" name="Proc. Natl. Acad. Sci. U.S.A.">
        <title>The complete genome sequence of Mycobacterium bovis.</title>
        <authorList>
            <person name="Garnier T."/>
            <person name="Eiglmeier K."/>
            <person name="Camus J.-C."/>
            <person name="Medina N."/>
            <person name="Mansoor H."/>
            <person name="Pryor M."/>
            <person name="Duthoy S."/>
            <person name="Grondin S."/>
            <person name="Lacroix C."/>
            <person name="Monsempe C."/>
            <person name="Simon S."/>
            <person name="Harris B."/>
            <person name="Atkin R."/>
            <person name="Doggett J."/>
            <person name="Mayes R."/>
            <person name="Keating L."/>
            <person name="Wheeler P.R."/>
            <person name="Parkhill J."/>
            <person name="Barrell B.G."/>
            <person name="Cole S.T."/>
            <person name="Gordon S.V."/>
            <person name="Hewinson R.G."/>
        </authorList>
    </citation>
    <scope>NUCLEOTIDE SEQUENCE [LARGE SCALE GENOMIC DNA]</scope>
    <source>
        <strain>ATCC BAA-935 / AF2122/97</strain>
    </source>
</reference>
<reference key="2">
    <citation type="journal article" date="2017" name="Genome Announc.">
        <title>Updated reference genome sequence and annotation of Mycobacterium bovis AF2122/97.</title>
        <authorList>
            <person name="Malone K.M."/>
            <person name="Farrell D."/>
            <person name="Stuber T.P."/>
            <person name="Schubert O.T."/>
            <person name="Aebersold R."/>
            <person name="Robbe-Austerman S."/>
            <person name="Gordon S.V."/>
        </authorList>
    </citation>
    <scope>NUCLEOTIDE SEQUENCE [LARGE SCALE GENOMIC DNA]</scope>
    <scope>GENOME REANNOTATION</scope>
    <source>
        <strain>ATCC BAA-935 / AF2122/97</strain>
    </source>
</reference>
<organism>
    <name type="scientific">Mycobacterium bovis (strain ATCC BAA-935 / AF2122/97)</name>
    <dbReference type="NCBI Taxonomy" id="233413"/>
    <lineage>
        <taxon>Bacteria</taxon>
        <taxon>Bacillati</taxon>
        <taxon>Actinomycetota</taxon>
        <taxon>Actinomycetes</taxon>
        <taxon>Mycobacteriales</taxon>
        <taxon>Mycobacteriaceae</taxon>
        <taxon>Mycobacterium</taxon>
        <taxon>Mycobacterium tuberculosis complex</taxon>
    </lineage>
</organism>
<accession>P65375</accession>
<accession>A0A1R3XVR7</accession>
<accession>O53653</accession>
<accession>X2BED8</accession>
<name>MMPLB_MYCBO</name>
<gene>
    <name type="primary">mmpL11</name>
    <name type="ordered locus">BQ2027_MB0208C</name>
</gene>
<sequence length="966" mass="103502">MMRLSRNLRRCRWLVFTGWLLALVPAVYLAMTQSGNLTGGGFEVAGSQSLLVHDQLDAHYPDRGAPALALVAAPRPDASYQDIDNAVALLRQIASELPGVTEAPNPTQRPPQPDRPYVVSLRLDARNAGTSDVAKKLRDRIGVKGDQSGQTANGKVRLYVIGQGALSAAAAANTKHDIANAERWNLPIILMVLVAVFGSLAAAAIPLALAVCTVVITMGLVFVLSMHTTMSVFVTSTVSMFGIALAVDYSLFILMRYREELRCGRRPPDAVDAAMATSGLAVVLSGMTVIASLTGIYLINTPALRSMATGAILAVAVAMLTSATLTPAVLATFARAAAKRSALVHWSRRPASTQSWFWSRWVGWVMRRPWITALAASTVLLVMAAPATLMVLGNSLLRQFDSSHEIRTGAAAAAQALGPGALGPVQVLVRFDAGGASAPEHSQTIAAIRHRIAQAPNVVSVAPPRFADDNGSALLSAVLSVDPEDLGARDTITWMRTQLPRVAGAAQVDVGGPTALIKDFDDRVSATQPLVLVFVAVIAFLMLLISIRSVFLAFKGVLMTLLSVAAAYGSLVMVFQWGWARGLGFPALHSIDSTVPPLVLAMTFGLSMDYEIFLLTRIRERFLQTGQTRDAVAYGVRTSARTITSAALIMIAVFCGFAFAGMPLVAEIGVACAVAIAVDATVVRLVLVPALMAMFDRWNWWLPRWLAHILPSVDFDRPLPKVDLGDVVVIPDDFAAAIPPSADVRMVLKSAAKLKRLAPDAICVTDPLAFTGCGCDGKALDQVQLAYRNGIARAISWGQRPVHPVTVWRKRLAVALDALQTTTWECGGVQTHRAGPGYRRRSPVETTNVALPTGDRLQIPTGAETLRFKGYLIMSRNSSHDYADFADLVDTMAPETAAAVLAGMDRYYSCQAPGRQWMATQLVGRLADPQPSDLGDQSPGADAQAKWEEVRRRCLSVAVAMLEEAR</sequence>
<dbReference type="EMBL" id="LT708304">
    <property type="protein sequence ID" value="SIT98685.1"/>
    <property type="molecule type" value="Genomic_DNA"/>
</dbReference>
<dbReference type="RefSeq" id="NP_853873.1">
    <property type="nucleotide sequence ID" value="NC_002945.3"/>
</dbReference>
<dbReference type="RefSeq" id="WP_003401190.1">
    <property type="nucleotide sequence ID" value="NC_002945.4"/>
</dbReference>
<dbReference type="SMR" id="P65375"/>
<dbReference type="PATRIC" id="fig|233413.5.peg.234"/>
<dbReference type="Proteomes" id="UP000001419">
    <property type="component" value="Chromosome"/>
</dbReference>
<dbReference type="GO" id="GO:0005886">
    <property type="term" value="C:plasma membrane"/>
    <property type="evidence" value="ECO:0007669"/>
    <property type="project" value="UniProtKB-SubCell"/>
</dbReference>
<dbReference type="FunFam" id="1.20.1640.10:FF:000049">
    <property type="entry name" value="Transmembrane transport protein MmpL11"/>
    <property type="match status" value="1"/>
</dbReference>
<dbReference type="Gene3D" id="1.20.1640.10">
    <property type="entry name" value="Multidrug efflux transporter AcrB transmembrane domain"/>
    <property type="match status" value="2"/>
</dbReference>
<dbReference type="InterPro" id="IPR004869">
    <property type="entry name" value="MMPL_dom"/>
</dbReference>
<dbReference type="InterPro" id="IPR050545">
    <property type="entry name" value="Mycobact_MmpL"/>
</dbReference>
<dbReference type="InterPro" id="IPR000731">
    <property type="entry name" value="SSD"/>
</dbReference>
<dbReference type="PANTHER" id="PTHR33406">
    <property type="entry name" value="MEMBRANE PROTEIN MJ1562-RELATED"/>
    <property type="match status" value="1"/>
</dbReference>
<dbReference type="PANTHER" id="PTHR33406:SF13">
    <property type="entry name" value="MEMBRANE PROTEIN YDFJ"/>
    <property type="match status" value="1"/>
</dbReference>
<dbReference type="Pfam" id="PF03176">
    <property type="entry name" value="MMPL"/>
    <property type="match status" value="2"/>
</dbReference>
<dbReference type="SUPFAM" id="SSF82866">
    <property type="entry name" value="Multidrug efflux transporter AcrB transmembrane domain"/>
    <property type="match status" value="2"/>
</dbReference>
<dbReference type="PROSITE" id="PS50156">
    <property type="entry name" value="SSD"/>
    <property type="match status" value="1"/>
</dbReference>
<feature type="chain" id="PRO_0000103578" description="Probable transport protein MmpL11">
    <location>
        <begin position="1"/>
        <end position="966"/>
    </location>
</feature>
<feature type="transmembrane region" description="Helical" evidence="1">
    <location>
        <begin position="13"/>
        <end position="33"/>
    </location>
</feature>
<feature type="transmembrane region" description="Helical" evidence="1">
    <location>
        <begin position="188"/>
        <end position="208"/>
    </location>
</feature>
<feature type="transmembrane region" description="Helical" evidence="1">
    <location>
        <begin position="214"/>
        <end position="234"/>
    </location>
</feature>
<feature type="transmembrane region" description="Helical" evidence="1">
    <location>
        <begin position="235"/>
        <end position="255"/>
    </location>
</feature>
<feature type="transmembrane region" description="Helical" evidence="1">
    <location>
        <begin position="279"/>
        <end position="299"/>
    </location>
</feature>
<feature type="transmembrane region" description="Helical" evidence="1">
    <location>
        <begin position="311"/>
        <end position="331"/>
    </location>
</feature>
<feature type="transmembrane region" description="Helical" evidence="1">
    <location>
        <begin position="373"/>
        <end position="393"/>
    </location>
</feature>
<feature type="transmembrane region" description="Helical" evidence="1">
    <location>
        <begin position="527"/>
        <end position="547"/>
    </location>
</feature>
<feature type="transmembrane region" description="Helical" evidence="1">
    <location>
        <begin position="557"/>
        <end position="577"/>
    </location>
</feature>
<feature type="transmembrane region" description="Helical" evidence="1">
    <location>
        <begin position="595"/>
        <end position="615"/>
    </location>
</feature>
<feature type="transmembrane region" description="Helical" evidence="1">
    <location>
        <begin position="646"/>
        <end position="666"/>
    </location>
</feature>
<feature type="transmembrane region" description="Helical" evidence="1">
    <location>
        <begin position="668"/>
        <end position="688"/>
    </location>
</feature>
<protein>
    <recommendedName>
        <fullName evidence="2">Probable transport protein MmpL11</fullName>
    </recommendedName>
</protein>
<comment type="subcellular location">
    <subcellularLocation>
        <location evidence="2">Cell membrane</location>
        <topology evidence="1">Multi-pass membrane protein</topology>
    </subcellularLocation>
</comment>
<comment type="similarity">
    <text evidence="2">Belongs to the resistance-nodulation-cell division (RND) (TC 2.A.6) family. MmpL subfamily.</text>
</comment>